<accession>P50696</accession>
<dbReference type="EMBL" id="L39775">
    <property type="protein sequence ID" value="AAB09225.1"/>
    <property type="molecule type" value="mRNA"/>
</dbReference>
<dbReference type="SMR" id="P50696"/>
<dbReference type="EnsemblPlants" id="AVESA.00001b.r3.1Cg0000041.1">
    <property type="protein sequence ID" value="cds.AVESA.00001b.r3.1Cg0000041.1"/>
    <property type="gene ID" value="AVESA.00001b.r3.1Cg0000041"/>
</dbReference>
<dbReference type="EnsemblPlants" id="AVESA.00010b.r2.1CG0113800.1">
    <property type="protein sequence ID" value="AVESA.00010b.r2.1CG0113800.1.CDS.1"/>
    <property type="gene ID" value="AVESA.00010b.r2.1CG0113800"/>
</dbReference>
<dbReference type="Gramene" id="AVESA.00001b.r3.1Cg0000041.1">
    <property type="protein sequence ID" value="cds.AVESA.00001b.r3.1Cg0000041.1"/>
    <property type="gene ID" value="AVESA.00001b.r3.1Cg0000041"/>
</dbReference>
<dbReference type="Gramene" id="AVESA.00010b.r2.1CG0113800.1">
    <property type="protein sequence ID" value="AVESA.00010b.r2.1CG0113800.1.CDS.1"/>
    <property type="gene ID" value="AVESA.00010b.r2.1CG0113800"/>
</dbReference>
<dbReference type="GO" id="GO:0050832">
    <property type="term" value="P:defense response to fungus"/>
    <property type="evidence" value="ECO:0007669"/>
    <property type="project" value="UniProtKB-KW"/>
</dbReference>
<dbReference type="GO" id="GO:0031640">
    <property type="term" value="P:killing of cells of another organism"/>
    <property type="evidence" value="ECO:0007669"/>
    <property type="project" value="UniProtKB-KW"/>
</dbReference>
<dbReference type="CDD" id="cd09217">
    <property type="entry name" value="TLP-P"/>
    <property type="match status" value="1"/>
</dbReference>
<dbReference type="Gene3D" id="2.60.110.10">
    <property type="entry name" value="Thaumatin"/>
    <property type="match status" value="1"/>
</dbReference>
<dbReference type="InterPro" id="IPR037176">
    <property type="entry name" value="Osmotin/thaumatin-like_sf"/>
</dbReference>
<dbReference type="InterPro" id="IPR001938">
    <property type="entry name" value="Thaumatin"/>
</dbReference>
<dbReference type="InterPro" id="IPR017949">
    <property type="entry name" value="Thaumatin_CS"/>
</dbReference>
<dbReference type="PANTHER" id="PTHR31048">
    <property type="entry name" value="OS03G0233200 PROTEIN"/>
    <property type="match status" value="1"/>
</dbReference>
<dbReference type="Pfam" id="PF00314">
    <property type="entry name" value="Thaumatin"/>
    <property type="match status" value="1"/>
</dbReference>
<dbReference type="PIRSF" id="PIRSF002703">
    <property type="entry name" value="Thaumatin"/>
    <property type="match status" value="1"/>
</dbReference>
<dbReference type="PRINTS" id="PR00347">
    <property type="entry name" value="THAUMATIN"/>
</dbReference>
<dbReference type="SMART" id="SM00205">
    <property type="entry name" value="THN"/>
    <property type="match status" value="1"/>
</dbReference>
<dbReference type="SUPFAM" id="SSF49870">
    <property type="entry name" value="Osmotin, thaumatin-like protein"/>
    <property type="match status" value="1"/>
</dbReference>
<dbReference type="PROSITE" id="PS00316">
    <property type="entry name" value="THAUMATIN_1"/>
    <property type="match status" value="1"/>
</dbReference>
<dbReference type="PROSITE" id="PS51367">
    <property type="entry name" value="THAUMATIN_2"/>
    <property type="match status" value="1"/>
</dbReference>
<proteinExistence type="evidence at transcript level"/>
<gene>
    <name type="primary">RASTL-2</name>
</gene>
<keyword id="KW-0929">Antimicrobial</keyword>
<keyword id="KW-0295">Fungicide</keyword>
<keyword id="KW-0568">Pathogenesis-related protein</keyword>
<keyword id="KW-0611">Plant defense</keyword>
<keyword id="KW-0732">Signal</keyword>
<organism>
    <name type="scientific">Avena sativa</name>
    <name type="common">Oat</name>
    <dbReference type="NCBI Taxonomy" id="4498"/>
    <lineage>
        <taxon>Eukaryota</taxon>
        <taxon>Viridiplantae</taxon>
        <taxon>Streptophyta</taxon>
        <taxon>Embryophyta</taxon>
        <taxon>Tracheophyta</taxon>
        <taxon>Spermatophyta</taxon>
        <taxon>Magnoliopsida</taxon>
        <taxon>Liliopsida</taxon>
        <taxon>Poales</taxon>
        <taxon>Poaceae</taxon>
        <taxon>BOP clade</taxon>
        <taxon>Pooideae</taxon>
        <taxon>Poodae</taxon>
        <taxon>Poeae</taxon>
        <taxon>Poeae Chloroplast Group 1 (Aveneae type)</taxon>
        <taxon>Aveninae</taxon>
        <taxon>Avena</taxon>
    </lineage>
</organism>
<comment type="function">
    <text>Associated with resistance against stem rust fungi.</text>
</comment>
<comment type="similarity">
    <text evidence="2">Belongs to the thaumatin family.</text>
</comment>
<name>RST2_AVESA</name>
<sequence length="169" mass="17403">MATSSAVLFFLLAVFAAGASAATFRITNNCGFTVWPAGIPVGGGFQLNSKQSSNINVPAGTSAGRIWGRTGCSFNNGRGSCATGDCAGALSCTLSGQPATLAEYTIGGSQDFYDISVIDGYNLAMDFSCSTGVALKCRDANCPDAYHHPNDVATHACNGNSNYQITFCP</sequence>
<protein>
    <recommendedName>
        <fullName>Thaumatin-like pathogenesis-related protein 2</fullName>
    </recommendedName>
</protein>
<reference key="1">
    <citation type="journal article" date="1996" name="Mol. Plant Microbe Interact.">
        <title>Isolation and expression of a host response gene family encoding thaumatin-like proteins in incompatible oat-stem rust fungus interactions.</title>
        <authorList>
            <person name="Lin K.C."/>
            <person name="Bushnell W.R."/>
            <person name="Szabo L.J."/>
            <person name="Smith A.G."/>
        </authorList>
    </citation>
    <scope>NUCLEOTIDE SEQUENCE [MRNA]</scope>
    <source>
        <strain>cv. Rodney</strain>
    </source>
</reference>
<evidence type="ECO:0000255" key="1"/>
<evidence type="ECO:0000255" key="2">
    <source>
        <dbReference type="PROSITE-ProRule" id="PRU00699"/>
    </source>
</evidence>
<feature type="signal peptide" evidence="1">
    <location>
        <begin position="1"/>
        <end position="21"/>
    </location>
</feature>
<feature type="chain" id="PRO_0000034033" description="Thaumatin-like pathogenesis-related protein 2">
    <location>
        <begin position="22"/>
        <end position="169"/>
    </location>
</feature>